<gene>
    <name evidence="17" type="primary">Bscl2</name>
    <name evidence="13" type="synonym">Gng3lg</name>
    <name type="ORF">MNCb-2630</name>
</gene>
<sequence length="383" mass="43105">MVNDPPVPALLWAQEVGHVLAGRARRLMLQFGVLFCTILLLLWVSVFLYGSFYYSYMPTVSHLSPVHFHYRTDCDSSTASLCSFPVANVSLAKSGRDRVLMYGQPYRVTLELELPESPVNQDLGMFLVTVSCYTRGGRIISTSSRSVMLHYRSQLLQVLDTLLFSSLLLFGFAEQKQLLEVELYSDYRENSYVPTTGAIIEIHSKRIQMYGAYLRIHAHFTGLRYLLYNFPMTCAFVGVASNFTFLSVIVLFSYMQWVWGAVWPRHRFSLQVNIRQRDNSHHGAPRRISRHQPGQESTQQSDVTEDGESPEDPSGTEGQLSEEEKPEKRPLNGEEEQEPEASDGSWEDAALLTEANPPTSASASALAPETLGSLRQRPTCSSS</sequence>
<comment type="function">
    <text evidence="2 5 6 7 8">Plays a crucial role in the formation of lipid droplets (LDs) which are storage organelles at the center of lipid and energy homeostasis (By similarity). In association with LDAF1, defines the sites of LD formation in the ER (By similarity). Also required for growth and maturation of small nascent LDs into larger mature LDs (By similarity). Mediates the formation and/or stabilization of endoplasmic reticulum-lipid droplets (ER-LD) contacts, facilitating protein and lipid delivery from the ER into growing LDs (By similarity). Regulates the maturation of ZFYVE1-positive nascent LDs and the function of the RAB18-ZFYVE1 complex in mediating the formation of ER-LD contacts (By similarity). Binds anionic phospholipids including phosphatidic acid (By similarity). Plays an important role in the differentiation and development of adipocytes (PubMed:18458148, PubMed:19574402, PubMed:21551454, PubMed:22269949).</text>
</comment>
<comment type="subunit">
    <text evidence="2">Undecamer (an oligomer having eleven subunits) (By similarity). Oligomerization is important for its function in lipid droplet formation (By similarity). Interacts with LDAF1 to form an oligomeric complex (By similarity). Interacts with RAB18 (By similarity). Interacts with ZFYVE1 in a RAB18-dependent manner (By similarity).</text>
</comment>
<comment type="subcellular location">
    <subcellularLocation>
        <location evidence="6">Endoplasmic reticulum membrane</location>
        <topology evidence="3">Multi-pass membrane protein</topology>
    </subcellularLocation>
    <subcellularLocation>
        <location evidence="2">Lipid droplet</location>
    </subcellularLocation>
    <text evidence="2">Localizes at endoplasmic reticulum-lipid droplets (ER-LD) contact sites.</text>
</comment>
<comment type="tissue specificity">
    <text evidence="5 6 9 11">Expressed in the paraventricular nucleus of the hypothalamus (PVN) and brainstem dorsal vagal complex (DVC) in oxytocin and catecholaminergic neurons (at protein level). Highest expression detected in subcutaneous and epididymal white adipose tissue, brown adipose tissue and testis. Also expressed in brain, skeletal muscle and adrenal gland, with lower levels detected in liver, heart, kidney, spleen, lung and small intestine. In brain, detected in piriform cortex, olfactory tubercle, islands of Calleja, lateral septal nucleus, medial septal nucleus, nucleus of the vertical limb of the diagonal band, nucleus of the horizontal limb of the diagonal band, preoptic area, paraventricular thalamic nucleus, lateral globus pallidus, supraoptic nucleus, suprachiasmatic nucleus, subfornical organ, paraventricular nucleus of the hypothalamus, zona incerta, dorsomedial nucleus of the hypothalamus, ventromedial nucleus of the hypothalamus, arcuate nucleus of the hypothalamus, basomedial amygdaloid nucleus, medial amygdaloid nucleus, medial habenular, pyramidal cell layer of the hippocampus, granular layer of the dentate gyrus, posterior hypothalamus, supramammilliary nucleus, premammillary nucleus, nucleus of Darkschewitsch, Edinger-Westphal nucleus, ventral tegmental area, dorsal raphe nucleus, periaqueductal gray, median raphe nucleus, lateral parabrachial nucleus, dorsal tegmental nucleus, laterodorsal tegmental nucleus, locus coeruleus, Barrington's nucleus, medial vestibular nucleus, ambiguous nucleus, dorsal vagal complex and hypoglossal nucleus.</text>
</comment>
<comment type="induction">
    <text evidence="5 6 10">Up-regulated during in vitro adipocyte differentiation.</text>
</comment>
<comment type="disruption phenotype">
    <text evidence="7 8">Mutant mice display increased early postnatal mortality rate, reduction of total body fat mass, nearly total absence of gonadal fat and great reduction in subcutaneous fat. Mice have enlarged visceral organs, markedly steatotic liver, decreased adipocyte size and number, and display decreased levels of plasma adiponectin and leptin, glucose intolerance and insulin resistance but not hypertriglyceridemia.</text>
</comment>
<comment type="similarity">
    <text evidence="12">Belongs to the seipin family.</text>
</comment>
<comment type="sequence caution" evidence="12">
    <conflict type="erroneous initiation">
        <sequence resource="EMBL-CDS" id="AAH61689"/>
    </conflict>
    <text>Extended N-terminus.</text>
</comment>
<comment type="sequence caution" evidence="12">
    <conflict type="erroneous initiation">
        <sequence resource="EMBL-CDS" id="BAA95071"/>
    </conflict>
    <text>Truncated N-terminus.</text>
</comment>
<comment type="sequence caution" evidence="12">
    <conflict type="erroneous initiation">
        <sequence resource="EMBL-CDS" id="BAE34722"/>
    </conflict>
    <text>Extended N-terminus.</text>
</comment>
<name>BSCL2_MOUSE</name>
<feature type="chain" id="PRO_0000191680" description="Seipin">
    <location>
        <begin position="1"/>
        <end position="383"/>
    </location>
</feature>
<feature type="topological domain" description="Cytoplasmic" evidence="3">
    <location>
        <begin position="1"/>
        <end position="27"/>
    </location>
</feature>
<feature type="transmembrane region" description="Helical" evidence="3">
    <location>
        <begin position="28"/>
        <end position="48"/>
    </location>
</feature>
<feature type="topological domain" description="Lumenal" evidence="3">
    <location>
        <begin position="49"/>
        <end position="242"/>
    </location>
</feature>
<feature type="transmembrane region" description="Helical" evidence="3">
    <location>
        <begin position="243"/>
        <end position="263"/>
    </location>
</feature>
<feature type="topological domain" description="Cytoplasmic" evidence="3">
    <location>
        <begin position="264"/>
        <end position="383"/>
    </location>
</feature>
<feature type="region of interest" description="Disordered" evidence="4">
    <location>
        <begin position="279"/>
        <end position="383"/>
    </location>
</feature>
<feature type="compositionally biased region" description="Polar residues" evidence="4">
    <location>
        <begin position="292"/>
        <end position="302"/>
    </location>
</feature>
<feature type="compositionally biased region" description="Basic and acidic residues" evidence="4">
    <location>
        <begin position="322"/>
        <end position="332"/>
    </location>
</feature>
<feature type="compositionally biased region" description="Low complexity" evidence="4">
    <location>
        <begin position="353"/>
        <end position="371"/>
    </location>
</feature>
<feature type="modified residue" description="Phosphoserine" evidence="2">
    <location>
        <position position="289"/>
    </location>
</feature>
<feature type="modified residue" description="Phosphoserine" evidence="1">
    <location>
        <position position="342"/>
    </location>
</feature>
<feature type="modified residue" description="Phosphoserine" evidence="1">
    <location>
        <position position="345"/>
    </location>
</feature>
<feature type="glycosylation site" description="N-linked (GlcNAc...) asparagine" evidence="2">
    <location>
        <position position="88"/>
    </location>
</feature>
<feature type="glycosylation site" description="N-linked (GlcNAc...) asparagine" evidence="3">
    <location>
        <position position="242"/>
    </location>
</feature>
<feature type="sequence conflict" description="In Ref. 3; BAA92759." evidence="12" ref="3">
    <original>A</original>
    <variation>V</variation>
    <location>
        <position position="341"/>
    </location>
</feature>
<keyword id="KW-0256">Endoplasmic reticulum</keyword>
<keyword id="KW-0325">Glycoprotein</keyword>
<keyword id="KW-0442">Lipid degradation</keyword>
<keyword id="KW-0551">Lipid droplet</keyword>
<keyword id="KW-0443">Lipid metabolism</keyword>
<keyword id="KW-0472">Membrane</keyword>
<keyword id="KW-0597">Phosphoprotein</keyword>
<keyword id="KW-1185">Reference proteome</keyword>
<keyword id="KW-0812">Transmembrane</keyword>
<keyword id="KW-1133">Transmembrane helix</keyword>
<dbReference type="EMBL" id="AF069954">
    <property type="protein sequence ID" value="AAC77923.2"/>
    <property type="molecule type" value="mRNA"/>
</dbReference>
<dbReference type="EMBL" id="AB030196">
    <property type="protein sequence ID" value="BAA92759.1"/>
    <property type="molecule type" value="mRNA"/>
</dbReference>
<dbReference type="EMBL" id="AB041588">
    <property type="protein sequence ID" value="BAA95071.1"/>
    <property type="status" value="ALT_INIT"/>
    <property type="molecule type" value="mRNA"/>
</dbReference>
<dbReference type="EMBL" id="AK151606">
    <property type="protein sequence ID" value="BAE30545.1"/>
    <property type="molecule type" value="mRNA"/>
</dbReference>
<dbReference type="EMBL" id="AK155753">
    <property type="protein sequence ID" value="BAE33418.1"/>
    <property type="molecule type" value="mRNA"/>
</dbReference>
<dbReference type="EMBL" id="AK158901">
    <property type="protein sequence ID" value="BAE34722.1"/>
    <property type="status" value="ALT_INIT"/>
    <property type="molecule type" value="mRNA"/>
</dbReference>
<dbReference type="EMBL" id="AK170183">
    <property type="protein sequence ID" value="BAE41621.1"/>
    <property type="molecule type" value="mRNA"/>
</dbReference>
<dbReference type="EMBL" id="BC043023">
    <property type="protein sequence ID" value="AAH43023.2"/>
    <property type="molecule type" value="mRNA"/>
</dbReference>
<dbReference type="EMBL" id="BC061689">
    <property type="protein sequence ID" value="AAH61689.1"/>
    <property type="status" value="ALT_INIT"/>
    <property type="molecule type" value="mRNA"/>
</dbReference>
<dbReference type="CCDS" id="CCDS70931.1"/>
<dbReference type="RefSeq" id="NP_001129536.1">
    <property type="nucleotide sequence ID" value="NM_001136064.3"/>
</dbReference>
<dbReference type="RefSeq" id="NP_001277752.1">
    <property type="nucleotide sequence ID" value="NM_001290823.1"/>
</dbReference>
<dbReference type="RefSeq" id="NP_032170.3">
    <property type="nucleotide sequence ID" value="NM_008144.5"/>
</dbReference>
<dbReference type="RefSeq" id="XP_006526754.1">
    <property type="nucleotide sequence ID" value="XM_006526691.3"/>
</dbReference>
<dbReference type="RefSeq" id="XP_030106614.1">
    <property type="nucleotide sequence ID" value="XM_030250754.1"/>
</dbReference>
<dbReference type="SMR" id="Q9Z2E9"/>
<dbReference type="BioGRID" id="199989">
    <property type="interactions" value="1"/>
</dbReference>
<dbReference type="FunCoup" id="Q9Z2E9">
    <property type="interactions" value="2003"/>
</dbReference>
<dbReference type="STRING" id="10090.ENSMUSP00000127685"/>
<dbReference type="GlyConnect" id="2691">
    <property type="glycosylation" value="3 N-Linked glycans (1 site)"/>
</dbReference>
<dbReference type="GlyCosmos" id="Q9Z2E9">
    <property type="glycosylation" value="2 sites, 3 glycans"/>
</dbReference>
<dbReference type="GlyGen" id="Q9Z2E9">
    <property type="glycosylation" value="2 sites, 4 N-linked glycans (1 site)"/>
</dbReference>
<dbReference type="iPTMnet" id="Q9Z2E9"/>
<dbReference type="PhosphoSitePlus" id="Q9Z2E9"/>
<dbReference type="jPOST" id="Q9Z2E9"/>
<dbReference type="PaxDb" id="10090-ENSMUSP00000127685"/>
<dbReference type="PeptideAtlas" id="Q9Z2E9"/>
<dbReference type="ProteomicsDB" id="265382"/>
<dbReference type="Antibodypedia" id="28672">
    <property type="antibodies" value="171 antibodies from 27 providers"/>
</dbReference>
<dbReference type="DNASU" id="14705"/>
<dbReference type="Ensembl" id="ENSMUST00000086058.13">
    <property type="protein sequence ID" value="ENSMUSP00000083224.7"/>
    <property type="gene ID" value="ENSMUSG00000071657.13"/>
</dbReference>
<dbReference type="Ensembl" id="ENSMUST00000159634.8">
    <property type="protein sequence ID" value="ENSMUSP00000125422.2"/>
    <property type="gene ID" value="ENSMUSG00000071657.13"/>
</dbReference>
<dbReference type="Ensembl" id="ENSMUST00000160556.8">
    <property type="protein sequence ID" value="ENSMUSP00000123976.2"/>
    <property type="gene ID" value="ENSMUSG00000071657.13"/>
</dbReference>
<dbReference type="GeneID" id="14705"/>
<dbReference type="KEGG" id="mmu:14705"/>
<dbReference type="UCSC" id="uc008gni.2">
    <property type="organism name" value="mouse"/>
</dbReference>
<dbReference type="AGR" id="MGI:1298392"/>
<dbReference type="CTD" id="26580"/>
<dbReference type="MGI" id="MGI:1298392">
    <property type="gene designation" value="Bscl2"/>
</dbReference>
<dbReference type="VEuPathDB" id="HostDB:ENSMUSG00000071657"/>
<dbReference type="eggNOG" id="KOG4200">
    <property type="taxonomic scope" value="Eukaryota"/>
</dbReference>
<dbReference type="GeneTree" id="ENSGT00390000011639"/>
<dbReference type="HOGENOM" id="CLU_049458_1_1_1"/>
<dbReference type="InParanoid" id="Q9Z2E9"/>
<dbReference type="OMA" id="HSKQVQI"/>
<dbReference type="OrthoDB" id="3990054at2759"/>
<dbReference type="TreeFam" id="TF314000"/>
<dbReference type="BioGRID-ORCS" id="14705">
    <property type="hits" value="3 hits in 81 CRISPR screens"/>
</dbReference>
<dbReference type="ChiTaRS" id="Bscl2">
    <property type="organism name" value="mouse"/>
</dbReference>
<dbReference type="PRO" id="PR:Q9Z2E9"/>
<dbReference type="Proteomes" id="UP000000589">
    <property type="component" value="Chromosome 19"/>
</dbReference>
<dbReference type="RNAct" id="Q9Z2E9">
    <property type="molecule type" value="protein"/>
</dbReference>
<dbReference type="Bgee" id="ENSMUSG00000071657">
    <property type="expression patterns" value="Expressed in aorta tunica adventitia and 252 other cell types or tissues"/>
</dbReference>
<dbReference type="ExpressionAtlas" id="Q9Z2E9">
    <property type="expression patterns" value="baseline and differential"/>
</dbReference>
<dbReference type="GO" id="GO:0005829">
    <property type="term" value="C:cytosol"/>
    <property type="evidence" value="ECO:0007669"/>
    <property type="project" value="GOC"/>
</dbReference>
<dbReference type="GO" id="GO:0005783">
    <property type="term" value="C:endoplasmic reticulum"/>
    <property type="evidence" value="ECO:0000314"/>
    <property type="project" value="MGI"/>
</dbReference>
<dbReference type="GO" id="GO:0005789">
    <property type="term" value="C:endoplasmic reticulum membrane"/>
    <property type="evidence" value="ECO:0000250"/>
    <property type="project" value="UniProtKB"/>
</dbReference>
<dbReference type="GO" id="GO:0005811">
    <property type="term" value="C:lipid droplet"/>
    <property type="evidence" value="ECO:0007669"/>
    <property type="project" value="UniProtKB-SubCell"/>
</dbReference>
<dbReference type="GO" id="GO:0060612">
    <property type="term" value="P:adipose tissue development"/>
    <property type="evidence" value="ECO:0000315"/>
    <property type="project" value="MGI"/>
</dbReference>
<dbReference type="GO" id="GO:0061725">
    <property type="term" value="P:cytosolic lipolysis"/>
    <property type="evidence" value="ECO:0000315"/>
    <property type="project" value="MGI"/>
</dbReference>
<dbReference type="GO" id="GO:0045444">
    <property type="term" value="P:fat cell differentiation"/>
    <property type="evidence" value="ECO:0000315"/>
    <property type="project" value="UniProtKB"/>
</dbReference>
<dbReference type="GO" id="GO:0140042">
    <property type="term" value="P:lipid droplet formation"/>
    <property type="evidence" value="ECO:0000314"/>
    <property type="project" value="MGI"/>
</dbReference>
<dbReference type="GO" id="GO:0034389">
    <property type="term" value="P:lipid droplet organization"/>
    <property type="evidence" value="ECO:0000315"/>
    <property type="project" value="MGI"/>
</dbReference>
<dbReference type="GO" id="GO:0019915">
    <property type="term" value="P:lipid storage"/>
    <property type="evidence" value="ECO:0000315"/>
    <property type="project" value="MGI"/>
</dbReference>
<dbReference type="GO" id="GO:0050995">
    <property type="term" value="P:negative regulation of lipid catabolic process"/>
    <property type="evidence" value="ECO:0000315"/>
    <property type="project" value="UniProtKB"/>
</dbReference>
<dbReference type="GO" id="GO:0120162">
    <property type="term" value="P:positive regulation of cold-induced thermogenesis"/>
    <property type="evidence" value="ECO:0000315"/>
    <property type="project" value="YuBioLab"/>
</dbReference>
<dbReference type="GO" id="GO:1905693">
    <property type="term" value="P:regulation of phosphatidic acid biosynthetic process"/>
    <property type="evidence" value="ECO:0000315"/>
    <property type="project" value="MGI"/>
</dbReference>
<dbReference type="GO" id="GO:0048515">
    <property type="term" value="P:spermatid differentiation"/>
    <property type="evidence" value="ECO:0000315"/>
    <property type="project" value="MGI"/>
</dbReference>
<dbReference type="CDD" id="cd23993">
    <property type="entry name" value="Seipin"/>
    <property type="match status" value="1"/>
</dbReference>
<dbReference type="InterPro" id="IPR009617">
    <property type="entry name" value="Seipin"/>
</dbReference>
<dbReference type="PANTHER" id="PTHR21212">
    <property type="entry name" value="BERNARDINELLI-SEIP CONGENITAL LIPODYSTROPHY 2 HOMOLOG BSCL2 PROTEIN"/>
    <property type="match status" value="1"/>
</dbReference>
<dbReference type="PANTHER" id="PTHR21212:SF0">
    <property type="entry name" value="SEIPIN"/>
    <property type="match status" value="1"/>
</dbReference>
<dbReference type="Pfam" id="PF06775">
    <property type="entry name" value="Seipin"/>
    <property type="match status" value="1"/>
</dbReference>
<reference evidence="12 13" key="1">
    <citation type="journal article" date="1998" name="Genomics">
        <title>Structure and mapping of the G protein gamma3 subunit gene and a divergently transcribed novel gene, Gng3lg.</title>
        <authorList>
            <person name="Downes G.B."/>
            <person name="Copeland N.G."/>
            <person name="Jenkins N.A."/>
            <person name="Gautam N."/>
        </authorList>
    </citation>
    <scope>NUCLEOTIDE SEQUENCE [MRNA]</scope>
    <scope>TISSUE SPECIFICITY</scope>
    <source>
        <strain evidence="13">BALB/cJ</strain>
        <tissue evidence="13">Brain</tissue>
    </source>
</reference>
<reference evidence="12 16" key="2">
    <citation type="submission" date="2000-05" db="EMBL/GenBank/DDBJ databases">
        <authorList>
            <person name="Downes G.B."/>
            <person name="Gautam N."/>
        </authorList>
    </citation>
    <scope>SEQUENCE REVISION TO N-TERMINUS</scope>
</reference>
<reference evidence="15" key="3">
    <citation type="journal article" date="2000" name="Biochem. Biophys. Res. Commun.">
        <title>Growth suppression of Escherichia coli by induction of expression of mammalian genes with transmembrane or ATPase domains.</title>
        <authorList>
            <person name="Inoue S."/>
            <person name="Sano H."/>
            <person name="Ohta M."/>
        </authorList>
    </citation>
    <scope>NUCLEOTIDE SEQUENCE [MRNA]</scope>
    <source>
        <tissue evidence="15">Brain</tissue>
    </source>
</reference>
<reference evidence="12 16" key="4">
    <citation type="submission" date="2000-04" db="EMBL/GenBank/DDBJ databases">
        <title>Isolation of full-length cDNA clones from mouse brain cDNA library made by oligo-capping method.</title>
        <authorList>
            <person name="Osada N."/>
            <person name="Kusuda J."/>
            <person name="Tanuma R."/>
            <person name="Ito A."/>
            <person name="Hirata M."/>
            <person name="Sugano S."/>
            <person name="Hashimoto K."/>
        </authorList>
    </citation>
    <scope>NUCLEOTIDE SEQUENCE [LARGE SCALE MRNA]</scope>
    <source>
        <strain evidence="16">C57BL/6J</strain>
        <tissue evidence="16">Brain</tissue>
    </source>
</reference>
<reference key="5">
    <citation type="journal article" date="2005" name="Science">
        <title>The transcriptional landscape of the mammalian genome.</title>
        <authorList>
            <person name="Carninci P."/>
            <person name="Kasukawa T."/>
            <person name="Katayama S."/>
            <person name="Gough J."/>
            <person name="Frith M.C."/>
            <person name="Maeda N."/>
            <person name="Oyama R."/>
            <person name="Ravasi T."/>
            <person name="Lenhard B."/>
            <person name="Wells C."/>
            <person name="Kodzius R."/>
            <person name="Shimokawa K."/>
            <person name="Bajic V.B."/>
            <person name="Brenner S.E."/>
            <person name="Batalov S."/>
            <person name="Forrest A.R."/>
            <person name="Zavolan M."/>
            <person name="Davis M.J."/>
            <person name="Wilming L.G."/>
            <person name="Aidinis V."/>
            <person name="Allen J.E."/>
            <person name="Ambesi-Impiombato A."/>
            <person name="Apweiler R."/>
            <person name="Aturaliya R.N."/>
            <person name="Bailey T.L."/>
            <person name="Bansal M."/>
            <person name="Baxter L."/>
            <person name="Beisel K.W."/>
            <person name="Bersano T."/>
            <person name="Bono H."/>
            <person name="Chalk A.M."/>
            <person name="Chiu K.P."/>
            <person name="Choudhary V."/>
            <person name="Christoffels A."/>
            <person name="Clutterbuck D.R."/>
            <person name="Crowe M.L."/>
            <person name="Dalla E."/>
            <person name="Dalrymple B.P."/>
            <person name="de Bono B."/>
            <person name="Della Gatta G."/>
            <person name="di Bernardo D."/>
            <person name="Down T."/>
            <person name="Engstrom P."/>
            <person name="Fagiolini M."/>
            <person name="Faulkner G."/>
            <person name="Fletcher C.F."/>
            <person name="Fukushima T."/>
            <person name="Furuno M."/>
            <person name="Futaki S."/>
            <person name="Gariboldi M."/>
            <person name="Georgii-Hemming P."/>
            <person name="Gingeras T.R."/>
            <person name="Gojobori T."/>
            <person name="Green R.E."/>
            <person name="Gustincich S."/>
            <person name="Harbers M."/>
            <person name="Hayashi Y."/>
            <person name="Hensch T.K."/>
            <person name="Hirokawa N."/>
            <person name="Hill D."/>
            <person name="Huminiecki L."/>
            <person name="Iacono M."/>
            <person name="Ikeo K."/>
            <person name="Iwama A."/>
            <person name="Ishikawa T."/>
            <person name="Jakt M."/>
            <person name="Kanapin A."/>
            <person name="Katoh M."/>
            <person name="Kawasawa Y."/>
            <person name="Kelso J."/>
            <person name="Kitamura H."/>
            <person name="Kitano H."/>
            <person name="Kollias G."/>
            <person name="Krishnan S.P."/>
            <person name="Kruger A."/>
            <person name="Kummerfeld S.K."/>
            <person name="Kurochkin I.V."/>
            <person name="Lareau L.F."/>
            <person name="Lazarevic D."/>
            <person name="Lipovich L."/>
            <person name="Liu J."/>
            <person name="Liuni S."/>
            <person name="McWilliam S."/>
            <person name="Madan Babu M."/>
            <person name="Madera M."/>
            <person name="Marchionni L."/>
            <person name="Matsuda H."/>
            <person name="Matsuzawa S."/>
            <person name="Miki H."/>
            <person name="Mignone F."/>
            <person name="Miyake S."/>
            <person name="Morris K."/>
            <person name="Mottagui-Tabar S."/>
            <person name="Mulder N."/>
            <person name="Nakano N."/>
            <person name="Nakauchi H."/>
            <person name="Ng P."/>
            <person name="Nilsson R."/>
            <person name="Nishiguchi S."/>
            <person name="Nishikawa S."/>
            <person name="Nori F."/>
            <person name="Ohara O."/>
            <person name="Okazaki Y."/>
            <person name="Orlando V."/>
            <person name="Pang K.C."/>
            <person name="Pavan W.J."/>
            <person name="Pavesi G."/>
            <person name="Pesole G."/>
            <person name="Petrovsky N."/>
            <person name="Piazza S."/>
            <person name="Reed J."/>
            <person name="Reid J.F."/>
            <person name="Ring B.Z."/>
            <person name="Ringwald M."/>
            <person name="Rost B."/>
            <person name="Ruan Y."/>
            <person name="Salzberg S.L."/>
            <person name="Sandelin A."/>
            <person name="Schneider C."/>
            <person name="Schoenbach C."/>
            <person name="Sekiguchi K."/>
            <person name="Semple C.A."/>
            <person name="Seno S."/>
            <person name="Sessa L."/>
            <person name="Sheng Y."/>
            <person name="Shibata Y."/>
            <person name="Shimada H."/>
            <person name="Shimada K."/>
            <person name="Silva D."/>
            <person name="Sinclair B."/>
            <person name="Sperling S."/>
            <person name="Stupka E."/>
            <person name="Sugiura K."/>
            <person name="Sultana R."/>
            <person name="Takenaka Y."/>
            <person name="Taki K."/>
            <person name="Tammoja K."/>
            <person name="Tan S.L."/>
            <person name="Tang S."/>
            <person name="Taylor M.S."/>
            <person name="Tegner J."/>
            <person name="Teichmann S.A."/>
            <person name="Ueda H.R."/>
            <person name="van Nimwegen E."/>
            <person name="Verardo R."/>
            <person name="Wei C.L."/>
            <person name="Yagi K."/>
            <person name="Yamanishi H."/>
            <person name="Zabarovsky E."/>
            <person name="Zhu S."/>
            <person name="Zimmer A."/>
            <person name="Hide W."/>
            <person name="Bult C."/>
            <person name="Grimmond S.M."/>
            <person name="Teasdale R.D."/>
            <person name="Liu E.T."/>
            <person name="Brusic V."/>
            <person name="Quackenbush J."/>
            <person name="Wahlestedt C."/>
            <person name="Mattick J.S."/>
            <person name="Hume D.A."/>
            <person name="Kai C."/>
            <person name="Sasaki D."/>
            <person name="Tomaru Y."/>
            <person name="Fukuda S."/>
            <person name="Kanamori-Katayama M."/>
            <person name="Suzuki M."/>
            <person name="Aoki J."/>
            <person name="Arakawa T."/>
            <person name="Iida J."/>
            <person name="Imamura K."/>
            <person name="Itoh M."/>
            <person name="Kato T."/>
            <person name="Kawaji H."/>
            <person name="Kawagashira N."/>
            <person name="Kawashima T."/>
            <person name="Kojima M."/>
            <person name="Kondo S."/>
            <person name="Konno H."/>
            <person name="Nakano K."/>
            <person name="Ninomiya N."/>
            <person name="Nishio T."/>
            <person name="Okada M."/>
            <person name="Plessy C."/>
            <person name="Shibata K."/>
            <person name="Shiraki T."/>
            <person name="Suzuki S."/>
            <person name="Tagami M."/>
            <person name="Waki K."/>
            <person name="Watahiki A."/>
            <person name="Okamura-Oho Y."/>
            <person name="Suzuki H."/>
            <person name="Kawai J."/>
            <person name="Hayashizaki Y."/>
        </authorList>
    </citation>
    <scope>NUCLEOTIDE SEQUENCE [LARGE SCALE MRNA]</scope>
    <source>
        <strain>C57BL/6J</strain>
        <strain>NOD</strain>
        <tissue>Bone marrow macrophage</tissue>
        <tissue>Dendritic cell</tissue>
        <tissue>Visual cortex</tissue>
    </source>
</reference>
<reference evidence="14" key="6">
    <citation type="journal article" date="2004" name="Genome Res.">
        <title>The status, quality, and expansion of the NIH full-length cDNA project: the Mammalian Gene Collection (MGC).</title>
        <authorList>
            <consortium name="The MGC Project Team"/>
        </authorList>
    </citation>
    <scope>NUCLEOTIDE SEQUENCE [LARGE SCALE MRNA]</scope>
    <source>
        <strain>C57BL/6J</strain>
        <tissue>Brain</tissue>
        <tissue evidence="14">Olfactory epithelium</tissue>
    </source>
</reference>
<reference key="7">
    <citation type="journal article" date="2008" name="Diabetes">
        <title>The human lipodystrophy gene BSCL2/seipin may be essential for normal adipocyte differentiation.</title>
        <authorList>
            <person name="Payne V.A."/>
            <person name="Grimsey N."/>
            <person name="Tuthill A."/>
            <person name="Virtue S."/>
            <person name="Gray S.L."/>
            <person name="Dalla Nora E."/>
            <person name="Semple R.K."/>
            <person name="O'Rahilly S."/>
            <person name="Rochford J.J."/>
        </authorList>
    </citation>
    <scope>FUNCTION</scope>
    <scope>TISSUE SPECIFICITY</scope>
    <scope>INDUCTION</scope>
</reference>
<reference key="8">
    <citation type="journal article" date="2009" name="Endocrinology">
        <title>The human lipodystrophy gene product Berardinelli-Seip congenital lipodystrophy 2/seipin plays a key role in adipocyte differentiation.</title>
        <authorList>
            <person name="Chen W."/>
            <person name="Yechoor V.K."/>
            <person name="Chang B.H."/>
            <person name="Li M.V."/>
            <person name="March K.L."/>
            <person name="Chan L."/>
        </authorList>
    </citation>
    <scope>FUNCTION</scope>
    <scope>SUBCELLULAR LOCATION</scope>
    <scope>TISSUE SPECIFICITY</scope>
    <scope>INDUCTION</scope>
</reference>
<reference key="9">
    <citation type="journal article" date="2010" name="Cell">
        <title>A tissue-specific atlas of mouse protein phosphorylation and expression.</title>
        <authorList>
            <person name="Huttlin E.L."/>
            <person name="Jedrychowski M.P."/>
            <person name="Elias J.E."/>
            <person name="Goswami T."/>
            <person name="Rad R."/>
            <person name="Beausoleil S.A."/>
            <person name="Villen J."/>
            <person name="Haas W."/>
            <person name="Sowa M.E."/>
            <person name="Gygi S.P."/>
        </authorList>
    </citation>
    <scope>IDENTIFICATION BY MASS SPECTROMETRY [LARGE SCALE ANALYSIS]</scope>
    <source>
        <tissue>Brain</tissue>
        <tissue>Brown adipose tissue</tissue>
        <tissue>Lung</tissue>
        <tissue>Pancreas</tissue>
        <tissue>Spleen</tissue>
        <tissue>Testis</tissue>
    </source>
</reference>
<reference key="10">
    <citation type="journal article" date="2011" name="Hum. Mol. Genet.">
        <title>Seipin ablation in mice results in severe generalized lipodystrophy.</title>
        <authorList>
            <person name="Cui X."/>
            <person name="Wang Y."/>
            <person name="Tang Y."/>
            <person name="Liu Y."/>
            <person name="Zhao L."/>
            <person name="Deng J."/>
            <person name="Xu G."/>
            <person name="Peng X."/>
            <person name="Ju S."/>
            <person name="Liu G."/>
            <person name="Yang H."/>
        </authorList>
    </citation>
    <scope>FUNCTION</scope>
    <scope>DISRUPTION PHENOTYPE</scope>
</reference>
<reference key="11">
    <citation type="journal article" date="2012" name="Mol. Cell. Biol.">
        <title>Berardinelli-seip congenital lipodystrophy 2/seipin is a cell-autonomous regulator of lipolysis essential for adipocyte differentiation.</title>
        <authorList>
            <person name="Chen W."/>
            <person name="Chang B."/>
            <person name="Saha P."/>
            <person name="Hartig S.M."/>
            <person name="Li L."/>
            <person name="Reddy V.T."/>
            <person name="Yang Y."/>
            <person name="Yechoor V."/>
            <person name="Mancini M.A."/>
            <person name="Chan L."/>
        </authorList>
    </citation>
    <scope>FUNCTION</scope>
    <scope>DISRUPTION PHENOTYPE</scope>
</reference>
<reference key="12">
    <citation type="journal article" date="2012" name="PLoS ONE">
        <title>Neuroanatomical characterisation of the expression of the lipodystrophy and motor-neuropathy gene Bscl2 in adult mouse brain.</title>
        <authorList>
            <person name="Garfield A.S."/>
            <person name="Chan W.S."/>
            <person name="Dennis R.J."/>
            <person name="Ito D."/>
            <person name="Heisler L.K."/>
            <person name="Rochford J.J."/>
        </authorList>
    </citation>
    <scope>POSSIBLE FUNCTION</scope>
    <scope>TISSUE SPECIFICITY</scope>
</reference>
<reference key="13">
    <citation type="journal article" date="2019" name="Cells">
        <title>Promethin Is a Conserved Seipin Partner Protein.</title>
        <authorList>
            <person name="Castro I.G."/>
            <person name="Eisenberg-Bord M."/>
            <person name="Persiani E."/>
            <person name="Rochford J.J."/>
            <person name="Schuldiner M."/>
            <person name="Bohnert M."/>
        </authorList>
    </citation>
    <scope>INDUCTION</scope>
</reference>
<accession>Q9Z2E9</accession>
<accession>Q3TY41</accession>
<accession>Q3U1S5</accession>
<accession>Q810B0</accession>
<accession>Q9JJC2</accession>
<accession>Q9JMF1</accession>
<evidence type="ECO:0000250" key="1">
    <source>
        <dbReference type="UniProtKB" id="Q5FVJ6"/>
    </source>
</evidence>
<evidence type="ECO:0000250" key="2">
    <source>
        <dbReference type="UniProtKB" id="Q96G97"/>
    </source>
</evidence>
<evidence type="ECO:0000255" key="3"/>
<evidence type="ECO:0000256" key="4">
    <source>
        <dbReference type="SAM" id="MobiDB-lite"/>
    </source>
</evidence>
<evidence type="ECO:0000269" key="5">
    <source>
    </source>
</evidence>
<evidence type="ECO:0000269" key="6">
    <source>
    </source>
</evidence>
<evidence type="ECO:0000269" key="7">
    <source>
    </source>
</evidence>
<evidence type="ECO:0000269" key="8">
    <source>
    </source>
</evidence>
<evidence type="ECO:0000269" key="9">
    <source>
    </source>
</evidence>
<evidence type="ECO:0000269" key="10">
    <source>
    </source>
</evidence>
<evidence type="ECO:0000269" key="11">
    <source>
    </source>
</evidence>
<evidence type="ECO:0000305" key="12"/>
<evidence type="ECO:0000312" key="13">
    <source>
        <dbReference type="EMBL" id="AAC77923.2"/>
    </source>
</evidence>
<evidence type="ECO:0000312" key="14">
    <source>
        <dbReference type="EMBL" id="AAH61689.1"/>
    </source>
</evidence>
<evidence type="ECO:0000312" key="15">
    <source>
        <dbReference type="EMBL" id="BAA92759.1"/>
    </source>
</evidence>
<evidence type="ECO:0000312" key="16">
    <source>
        <dbReference type="EMBL" id="BAA95071.1"/>
    </source>
</evidence>
<evidence type="ECO:0000312" key="17">
    <source>
        <dbReference type="MGI" id="MGI:1298392"/>
    </source>
</evidence>
<organism>
    <name type="scientific">Mus musculus</name>
    <name type="common">Mouse</name>
    <dbReference type="NCBI Taxonomy" id="10090"/>
    <lineage>
        <taxon>Eukaryota</taxon>
        <taxon>Metazoa</taxon>
        <taxon>Chordata</taxon>
        <taxon>Craniata</taxon>
        <taxon>Vertebrata</taxon>
        <taxon>Euteleostomi</taxon>
        <taxon>Mammalia</taxon>
        <taxon>Eutheria</taxon>
        <taxon>Euarchontoglires</taxon>
        <taxon>Glires</taxon>
        <taxon>Rodentia</taxon>
        <taxon>Myomorpha</taxon>
        <taxon>Muroidea</taxon>
        <taxon>Muridae</taxon>
        <taxon>Murinae</taxon>
        <taxon>Mus</taxon>
        <taxon>Mus</taxon>
    </lineage>
</organism>
<protein>
    <recommendedName>
        <fullName>Seipin</fullName>
    </recommendedName>
    <alternativeName>
        <fullName>Bernardinelli-Seip congenital lipodystrophy type 2 protein homolog</fullName>
    </alternativeName>
</protein>
<proteinExistence type="evidence at protein level"/>